<protein>
    <recommendedName>
        <fullName evidence="1">Acetylglutamate kinase</fullName>
        <ecNumber evidence="1">2.7.2.8</ecNumber>
    </recommendedName>
    <alternativeName>
        <fullName evidence="1">N-acetyl-L-glutamate 5-phosphotransferase</fullName>
    </alternativeName>
    <alternativeName>
        <fullName evidence="1">NAG kinase</fullName>
        <shortName evidence="1">NAGK</shortName>
    </alternativeName>
</protein>
<evidence type="ECO:0000255" key="1">
    <source>
        <dbReference type="HAMAP-Rule" id="MF_00082"/>
    </source>
</evidence>
<feature type="chain" id="PRO_1000057539" description="Acetylglutamate kinase">
    <location>
        <begin position="1"/>
        <end position="317"/>
    </location>
</feature>
<feature type="binding site" evidence="1">
    <location>
        <begin position="70"/>
        <end position="71"/>
    </location>
    <ligand>
        <name>substrate</name>
    </ligand>
</feature>
<feature type="binding site" evidence="1">
    <location>
        <position position="92"/>
    </location>
    <ligand>
        <name>substrate</name>
    </ligand>
</feature>
<feature type="binding site" evidence="1">
    <location>
        <position position="191"/>
    </location>
    <ligand>
        <name>substrate</name>
    </ligand>
</feature>
<feature type="site" description="Transition state stabilizer" evidence="1">
    <location>
        <position position="35"/>
    </location>
</feature>
<feature type="site" description="Transition state stabilizer" evidence="1">
    <location>
        <position position="252"/>
    </location>
</feature>
<name>ARGB_CORGB</name>
<keyword id="KW-0028">Amino-acid biosynthesis</keyword>
<keyword id="KW-0055">Arginine biosynthesis</keyword>
<keyword id="KW-0067">ATP-binding</keyword>
<keyword id="KW-0963">Cytoplasm</keyword>
<keyword id="KW-0418">Kinase</keyword>
<keyword id="KW-0547">Nucleotide-binding</keyword>
<keyword id="KW-0808">Transferase</keyword>
<accession>A4QDZ0</accession>
<organism>
    <name type="scientific">Corynebacterium glutamicum (strain R)</name>
    <dbReference type="NCBI Taxonomy" id="340322"/>
    <lineage>
        <taxon>Bacteria</taxon>
        <taxon>Bacillati</taxon>
        <taxon>Actinomycetota</taxon>
        <taxon>Actinomycetes</taxon>
        <taxon>Mycobacteriales</taxon>
        <taxon>Corynebacteriaceae</taxon>
        <taxon>Corynebacterium</taxon>
    </lineage>
</organism>
<gene>
    <name evidence="1" type="primary">argB</name>
    <name type="ordered locus">cgR_1459</name>
</gene>
<reference key="1">
    <citation type="journal article" date="2007" name="Microbiology">
        <title>Comparative analysis of the Corynebacterium glutamicum group and complete genome sequence of strain R.</title>
        <authorList>
            <person name="Yukawa H."/>
            <person name="Omumasaba C.A."/>
            <person name="Nonaka H."/>
            <person name="Kos P."/>
            <person name="Okai N."/>
            <person name="Suzuki N."/>
            <person name="Suda M."/>
            <person name="Tsuge Y."/>
            <person name="Watanabe J."/>
            <person name="Ikeda Y."/>
            <person name="Vertes A.A."/>
            <person name="Inui M."/>
        </authorList>
    </citation>
    <scope>NUCLEOTIDE SEQUENCE [LARGE SCALE GENOMIC DNA]</scope>
    <source>
        <strain>R</strain>
    </source>
</reference>
<dbReference type="EC" id="2.7.2.8" evidence="1"/>
<dbReference type="EMBL" id="AP009044">
    <property type="protein sequence ID" value="BAF54450.1"/>
    <property type="molecule type" value="Genomic_DNA"/>
</dbReference>
<dbReference type="RefSeq" id="WP_003858695.1">
    <property type="nucleotide sequence ID" value="NC_009342.1"/>
</dbReference>
<dbReference type="SMR" id="A4QDZ0"/>
<dbReference type="GeneID" id="1019372"/>
<dbReference type="KEGG" id="cgt:cgR_1459"/>
<dbReference type="HOGENOM" id="CLU_053680_0_0_11"/>
<dbReference type="PhylomeDB" id="A4QDZ0"/>
<dbReference type="UniPathway" id="UPA00068">
    <property type="reaction ID" value="UER00107"/>
</dbReference>
<dbReference type="Proteomes" id="UP000006698">
    <property type="component" value="Chromosome"/>
</dbReference>
<dbReference type="GO" id="GO:0005737">
    <property type="term" value="C:cytoplasm"/>
    <property type="evidence" value="ECO:0007669"/>
    <property type="project" value="UniProtKB-SubCell"/>
</dbReference>
<dbReference type="GO" id="GO:0003991">
    <property type="term" value="F:acetylglutamate kinase activity"/>
    <property type="evidence" value="ECO:0007669"/>
    <property type="project" value="UniProtKB-UniRule"/>
</dbReference>
<dbReference type="GO" id="GO:0005524">
    <property type="term" value="F:ATP binding"/>
    <property type="evidence" value="ECO:0007669"/>
    <property type="project" value="UniProtKB-UniRule"/>
</dbReference>
<dbReference type="GO" id="GO:0042450">
    <property type="term" value="P:arginine biosynthetic process via ornithine"/>
    <property type="evidence" value="ECO:0007669"/>
    <property type="project" value="UniProtKB-UniRule"/>
</dbReference>
<dbReference type="GO" id="GO:0006526">
    <property type="term" value="P:L-arginine biosynthetic process"/>
    <property type="evidence" value="ECO:0007669"/>
    <property type="project" value="UniProtKB-UniPathway"/>
</dbReference>
<dbReference type="CDD" id="cd04250">
    <property type="entry name" value="AAK_NAGK-C"/>
    <property type="match status" value="1"/>
</dbReference>
<dbReference type="FunFam" id="3.40.1160.10:FF:000004">
    <property type="entry name" value="Acetylglutamate kinase"/>
    <property type="match status" value="1"/>
</dbReference>
<dbReference type="Gene3D" id="3.40.1160.10">
    <property type="entry name" value="Acetylglutamate kinase-like"/>
    <property type="match status" value="1"/>
</dbReference>
<dbReference type="HAMAP" id="MF_00082">
    <property type="entry name" value="ArgB"/>
    <property type="match status" value="1"/>
</dbReference>
<dbReference type="InterPro" id="IPR036393">
    <property type="entry name" value="AceGlu_kinase-like_sf"/>
</dbReference>
<dbReference type="InterPro" id="IPR004662">
    <property type="entry name" value="AcgluKinase_fam"/>
</dbReference>
<dbReference type="InterPro" id="IPR037528">
    <property type="entry name" value="ArgB"/>
</dbReference>
<dbReference type="InterPro" id="IPR001048">
    <property type="entry name" value="Asp/Glu/Uridylate_kinase"/>
</dbReference>
<dbReference type="InterPro" id="IPR001057">
    <property type="entry name" value="Glu/AcGlu_kinase"/>
</dbReference>
<dbReference type="InterPro" id="IPR041727">
    <property type="entry name" value="NAGK-C"/>
</dbReference>
<dbReference type="NCBIfam" id="TIGR00761">
    <property type="entry name" value="argB"/>
    <property type="match status" value="1"/>
</dbReference>
<dbReference type="PANTHER" id="PTHR23342">
    <property type="entry name" value="N-ACETYLGLUTAMATE SYNTHASE"/>
    <property type="match status" value="1"/>
</dbReference>
<dbReference type="PANTHER" id="PTHR23342:SF0">
    <property type="entry name" value="N-ACETYLGLUTAMATE SYNTHASE, MITOCHONDRIAL"/>
    <property type="match status" value="1"/>
</dbReference>
<dbReference type="Pfam" id="PF00696">
    <property type="entry name" value="AA_kinase"/>
    <property type="match status" value="1"/>
</dbReference>
<dbReference type="PIRSF" id="PIRSF000728">
    <property type="entry name" value="NAGK"/>
    <property type="match status" value="1"/>
</dbReference>
<dbReference type="PRINTS" id="PR00474">
    <property type="entry name" value="GLU5KINASE"/>
</dbReference>
<dbReference type="SUPFAM" id="SSF53633">
    <property type="entry name" value="Carbamate kinase-like"/>
    <property type="match status" value="1"/>
</dbReference>
<proteinExistence type="inferred from homology"/>
<sequence>MNDLIKDLGSEVRANVLAEALPWLQHFRDKIVVVKYGGNAMVDDDLKAAFAADMVFLRTVGAKPVVVHGGGPQISEMLNRVGLQGEFKGGFRVTTPEVMDIVRMVLFGQVGRDLVGLINSHGPYAVGTSGEDAGLFTAQKRMVNIDGVPTDIGLVGDIINVDASSLMDIIEAGRIPVVSTIAPGEDGQIYNINADTAAGALAAAIGAERLLVLTNVEGLYTDWPDKSSLVSKIKATELEAILPGLDSGMIPKMESCLNAVRGGVSAAHVIDGRIAHSVLLELLTMGGIGTMVLPDVFDRENYPEGTVFRKDDKDGEL</sequence>
<comment type="function">
    <text evidence="1">Catalyzes the ATP-dependent phosphorylation of N-acetyl-L-glutamate.</text>
</comment>
<comment type="catalytic activity">
    <reaction evidence="1">
        <text>N-acetyl-L-glutamate + ATP = N-acetyl-L-glutamyl 5-phosphate + ADP</text>
        <dbReference type="Rhea" id="RHEA:14629"/>
        <dbReference type="ChEBI" id="CHEBI:30616"/>
        <dbReference type="ChEBI" id="CHEBI:44337"/>
        <dbReference type="ChEBI" id="CHEBI:57936"/>
        <dbReference type="ChEBI" id="CHEBI:456216"/>
        <dbReference type="EC" id="2.7.2.8"/>
    </reaction>
</comment>
<comment type="pathway">
    <text evidence="1">Amino-acid biosynthesis; L-arginine biosynthesis; N(2)-acetyl-L-ornithine from L-glutamate: step 2/4.</text>
</comment>
<comment type="subcellular location">
    <subcellularLocation>
        <location evidence="1">Cytoplasm</location>
    </subcellularLocation>
</comment>
<comment type="similarity">
    <text evidence="1">Belongs to the acetylglutamate kinase family. ArgB subfamily.</text>
</comment>